<accession>Q54ET3</accession>
<feature type="chain" id="PRO_0000362057" description="Probable serine/threonine-protein kinase DDB_G0291350">
    <location>
        <begin position="1"/>
        <end position="369"/>
    </location>
</feature>
<feature type="domain" description="Protein kinase" evidence="1">
    <location>
        <begin position="22"/>
        <end position="367"/>
    </location>
</feature>
<feature type="region of interest" description="Disordered" evidence="3">
    <location>
        <begin position="169"/>
        <end position="225"/>
    </location>
</feature>
<feature type="compositionally biased region" description="Low complexity" evidence="3">
    <location>
        <begin position="175"/>
        <end position="221"/>
    </location>
</feature>
<feature type="active site" description="Proton acceptor" evidence="1 2">
    <location>
        <position position="159"/>
    </location>
</feature>
<feature type="binding site" evidence="1">
    <location>
        <begin position="28"/>
        <end position="36"/>
    </location>
    <ligand>
        <name>ATP</name>
        <dbReference type="ChEBI" id="CHEBI:30616"/>
    </ligand>
</feature>
<feature type="binding site" evidence="1">
    <location>
        <position position="51"/>
    </location>
    <ligand>
        <name>ATP</name>
        <dbReference type="ChEBI" id="CHEBI:30616"/>
    </ligand>
</feature>
<reference key="1">
    <citation type="journal article" date="2005" name="Nature">
        <title>The genome of the social amoeba Dictyostelium discoideum.</title>
        <authorList>
            <person name="Eichinger L."/>
            <person name="Pachebat J.A."/>
            <person name="Gloeckner G."/>
            <person name="Rajandream M.A."/>
            <person name="Sucgang R."/>
            <person name="Berriman M."/>
            <person name="Song J."/>
            <person name="Olsen R."/>
            <person name="Szafranski K."/>
            <person name="Xu Q."/>
            <person name="Tunggal B."/>
            <person name="Kummerfeld S."/>
            <person name="Madera M."/>
            <person name="Konfortov B.A."/>
            <person name="Rivero F."/>
            <person name="Bankier A.T."/>
            <person name="Lehmann R."/>
            <person name="Hamlin N."/>
            <person name="Davies R."/>
            <person name="Gaudet P."/>
            <person name="Fey P."/>
            <person name="Pilcher K."/>
            <person name="Chen G."/>
            <person name="Saunders D."/>
            <person name="Sodergren E.J."/>
            <person name="Davis P."/>
            <person name="Kerhornou A."/>
            <person name="Nie X."/>
            <person name="Hall N."/>
            <person name="Anjard C."/>
            <person name="Hemphill L."/>
            <person name="Bason N."/>
            <person name="Farbrother P."/>
            <person name="Desany B."/>
            <person name="Just E."/>
            <person name="Morio T."/>
            <person name="Rost R."/>
            <person name="Churcher C.M."/>
            <person name="Cooper J."/>
            <person name="Haydock S."/>
            <person name="van Driessche N."/>
            <person name="Cronin A."/>
            <person name="Goodhead I."/>
            <person name="Muzny D.M."/>
            <person name="Mourier T."/>
            <person name="Pain A."/>
            <person name="Lu M."/>
            <person name="Harper D."/>
            <person name="Lindsay R."/>
            <person name="Hauser H."/>
            <person name="James K.D."/>
            <person name="Quiles M."/>
            <person name="Madan Babu M."/>
            <person name="Saito T."/>
            <person name="Buchrieser C."/>
            <person name="Wardroper A."/>
            <person name="Felder M."/>
            <person name="Thangavelu M."/>
            <person name="Johnson D."/>
            <person name="Knights A."/>
            <person name="Loulseged H."/>
            <person name="Mungall K.L."/>
            <person name="Oliver K."/>
            <person name="Price C."/>
            <person name="Quail M.A."/>
            <person name="Urushihara H."/>
            <person name="Hernandez J."/>
            <person name="Rabbinowitsch E."/>
            <person name="Steffen D."/>
            <person name="Sanders M."/>
            <person name="Ma J."/>
            <person name="Kohara Y."/>
            <person name="Sharp S."/>
            <person name="Simmonds M.N."/>
            <person name="Spiegler S."/>
            <person name="Tivey A."/>
            <person name="Sugano S."/>
            <person name="White B."/>
            <person name="Walker D."/>
            <person name="Woodward J.R."/>
            <person name="Winckler T."/>
            <person name="Tanaka Y."/>
            <person name="Shaulsky G."/>
            <person name="Schleicher M."/>
            <person name="Weinstock G.M."/>
            <person name="Rosenthal A."/>
            <person name="Cox E.C."/>
            <person name="Chisholm R.L."/>
            <person name="Gibbs R.A."/>
            <person name="Loomis W.F."/>
            <person name="Platzer M."/>
            <person name="Kay R.R."/>
            <person name="Williams J.G."/>
            <person name="Dear P.H."/>
            <person name="Noegel A.A."/>
            <person name="Barrell B.G."/>
            <person name="Kuspa A."/>
        </authorList>
    </citation>
    <scope>NUCLEOTIDE SEQUENCE [LARGE SCALE GENOMIC DNA]</scope>
    <source>
        <strain>AX4</strain>
    </source>
</reference>
<gene>
    <name type="ORF">DDB_G0291350</name>
</gene>
<protein>
    <recommendedName>
        <fullName>Probable serine/threonine-protein kinase DDB_G0291350</fullName>
        <ecNumber>2.7.11.1</ecNumber>
    </recommendedName>
</protein>
<organism>
    <name type="scientific">Dictyostelium discoideum</name>
    <name type="common">Social amoeba</name>
    <dbReference type="NCBI Taxonomy" id="44689"/>
    <lineage>
        <taxon>Eukaryota</taxon>
        <taxon>Amoebozoa</taxon>
        <taxon>Evosea</taxon>
        <taxon>Eumycetozoa</taxon>
        <taxon>Dictyostelia</taxon>
        <taxon>Dictyosteliales</taxon>
        <taxon>Dictyosteliaceae</taxon>
        <taxon>Dictyostelium</taxon>
    </lineage>
</organism>
<keyword id="KW-0067">ATP-binding</keyword>
<keyword id="KW-0418">Kinase</keyword>
<keyword id="KW-0547">Nucleotide-binding</keyword>
<keyword id="KW-1185">Reference proteome</keyword>
<keyword id="KW-0723">Serine/threonine-protein kinase</keyword>
<keyword id="KW-0808">Transferase</keyword>
<sequence length="369" mass="42337">MGSSLSLCYPSDKTFNINGVKYTVNRILGEGGFSFVYLVKDNSNSKKYALKVMICQTQESINTAKREINAFQTFNHENIMKLIDHSISNHSQDTKEYRLLLPYYKDGTLQDLIDNQRTIYGKDTKKPLFKEKKCLQFFLKVCEAIQVFHNHSPPLAHRDIKPGNIVLQNLRRPSNNNNNNNNNNNNNNNNNNNNNNNNNNNNNNNNNNNNNNNNNNNNNNNSEDSDIEAIPILMDFGSVREARIKIENRKDALSLQDEVEQNTTPFYRAPELFDIPSDCQIDERIDVWALGCLLYTMAYNNSPFEVCDNEPNGSVALKVLSGLPKPFPPSQTNYSNQFNQLIIDMVNLDKDERLHLNQVIERINQIIQS</sequence>
<name>Y6373_DICDI</name>
<evidence type="ECO:0000255" key="1">
    <source>
        <dbReference type="PROSITE-ProRule" id="PRU00159"/>
    </source>
</evidence>
<evidence type="ECO:0000255" key="2">
    <source>
        <dbReference type="PROSITE-ProRule" id="PRU10027"/>
    </source>
</evidence>
<evidence type="ECO:0000256" key="3">
    <source>
        <dbReference type="SAM" id="MobiDB-lite"/>
    </source>
</evidence>
<dbReference type="EC" id="2.7.11.1"/>
<dbReference type="EMBL" id="AAFI02000177">
    <property type="protein sequence ID" value="EAL61659.1"/>
    <property type="molecule type" value="Genomic_DNA"/>
</dbReference>
<dbReference type="RefSeq" id="XP_635157.1">
    <property type="nucleotide sequence ID" value="XM_630065.1"/>
</dbReference>
<dbReference type="SMR" id="Q54ET3"/>
<dbReference type="FunCoup" id="Q54ET3">
    <property type="interactions" value="640"/>
</dbReference>
<dbReference type="STRING" id="44689.Q54ET3"/>
<dbReference type="PaxDb" id="44689-DDB0216373"/>
<dbReference type="EnsemblProtists" id="EAL61659">
    <property type="protein sequence ID" value="EAL61659"/>
    <property type="gene ID" value="DDB_G0291350"/>
</dbReference>
<dbReference type="GeneID" id="8628103"/>
<dbReference type="KEGG" id="ddi:DDB_G0291350"/>
<dbReference type="dictyBase" id="DDB_G0291350"/>
<dbReference type="VEuPathDB" id="AmoebaDB:DDB_G0291350"/>
<dbReference type="eggNOG" id="KOG2345">
    <property type="taxonomic scope" value="Eukaryota"/>
</dbReference>
<dbReference type="HOGENOM" id="CLU_000288_109_1_1"/>
<dbReference type="InParanoid" id="Q54ET3"/>
<dbReference type="OMA" id="AMHQYKV"/>
<dbReference type="PhylomeDB" id="Q54ET3"/>
<dbReference type="PRO" id="PR:Q54ET3"/>
<dbReference type="Proteomes" id="UP000002195">
    <property type="component" value="Chromosome 6"/>
</dbReference>
<dbReference type="GO" id="GO:0005737">
    <property type="term" value="C:cytoplasm"/>
    <property type="evidence" value="ECO:0000318"/>
    <property type="project" value="GO_Central"/>
</dbReference>
<dbReference type="GO" id="GO:0005794">
    <property type="term" value="C:Golgi apparatus"/>
    <property type="evidence" value="ECO:0000318"/>
    <property type="project" value="GO_Central"/>
</dbReference>
<dbReference type="GO" id="GO:0005524">
    <property type="term" value="F:ATP binding"/>
    <property type="evidence" value="ECO:0007669"/>
    <property type="project" value="UniProtKB-KW"/>
</dbReference>
<dbReference type="GO" id="GO:0106310">
    <property type="term" value="F:protein serine kinase activity"/>
    <property type="evidence" value="ECO:0007669"/>
    <property type="project" value="RHEA"/>
</dbReference>
<dbReference type="GO" id="GO:0004674">
    <property type="term" value="F:protein serine/threonine kinase activity"/>
    <property type="evidence" value="ECO:0000318"/>
    <property type="project" value="GO_Central"/>
</dbReference>
<dbReference type="Gene3D" id="1.10.510.10">
    <property type="entry name" value="Transferase(Phosphotransferase) domain 1"/>
    <property type="match status" value="2"/>
</dbReference>
<dbReference type="InterPro" id="IPR011009">
    <property type="entry name" value="Kinase-like_dom_sf"/>
</dbReference>
<dbReference type="InterPro" id="IPR000719">
    <property type="entry name" value="Prot_kinase_dom"/>
</dbReference>
<dbReference type="InterPro" id="IPR017441">
    <property type="entry name" value="Protein_kinase_ATP_BS"/>
</dbReference>
<dbReference type="InterPro" id="IPR052239">
    <property type="entry name" value="Ser/Thr-specific_kinases"/>
</dbReference>
<dbReference type="InterPro" id="IPR008271">
    <property type="entry name" value="Ser/Thr_kinase_AS"/>
</dbReference>
<dbReference type="PANTHER" id="PTHR45998">
    <property type="entry name" value="SERINE/THREONINE-PROTEIN KINASE 16"/>
    <property type="match status" value="1"/>
</dbReference>
<dbReference type="PANTHER" id="PTHR45998:SF2">
    <property type="entry name" value="SERINE_THREONINE-PROTEIN KINASE 16"/>
    <property type="match status" value="1"/>
</dbReference>
<dbReference type="Pfam" id="PF00069">
    <property type="entry name" value="Pkinase"/>
    <property type="match status" value="1"/>
</dbReference>
<dbReference type="PIRSF" id="PIRSF000654">
    <property type="entry name" value="Integrin-linked_kinase"/>
    <property type="match status" value="1"/>
</dbReference>
<dbReference type="SMART" id="SM00220">
    <property type="entry name" value="S_TKc"/>
    <property type="match status" value="1"/>
</dbReference>
<dbReference type="SUPFAM" id="SSF56112">
    <property type="entry name" value="Protein kinase-like (PK-like)"/>
    <property type="match status" value="1"/>
</dbReference>
<dbReference type="PROSITE" id="PS00107">
    <property type="entry name" value="PROTEIN_KINASE_ATP"/>
    <property type="match status" value="1"/>
</dbReference>
<dbReference type="PROSITE" id="PS50011">
    <property type="entry name" value="PROTEIN_KINASE_DOM"/>
    <property type="match status" value="1"/>
</dbReference>
<dbReference type="PROSITE" id="PS00108">
    <property type="entry name" value="PROTEIN_KINASE_ST"/>
    <property type="match status" value="1"/>
</dbReference>
<proteinExistence type="inferred from homology"/>
<comment type="catalytic activity">
    <reaction>
        <text>L-seryl-[protein] + ATP = O-phospho-L-seryl-[protein] + ADP + H(+)</text>
        <dbReference type="Rhea" id="RHEA:17989"/>
        <dbReference type="Rhea" id="RHEA-COMP:9863"/>
        <dbReference type="Rhea" id="RHEA-COMP:11604"/>
        <dbReference type="ChEBI" id="CHEBI:15378"/>
        <dbReference type="ChEBI" id="CHEBI:29999"/>
        <dbReference type="ChEBI" id="CHEBI:30616"/>
        <dbReference type="ChEBI" id="CHEBI:83421"/>
        <dbReference type="ChEBI" id="CHEBI:456216"/>
        <dbReference type="EC" id="2.7.11.1"/>
    </reaction>
</comment>
<comment type="catalytic activity">
    <reaction>
        <text>L-threonyl-[protein] + ATP = O-phospho-L-threonyl-[protein] + ADP + H(+)</text>
        <dbReference type="Rhea" id="RHEA:46608"/>
        <dbReference type="Rhea" id="RHEA-COMP:11060"/>
        <dbReference type="Rhea" id="RHEA-COMP:11605"/>
        <dbReference type="ChEBI" id="CHEBI:15378"/>
        <dbReference type="ChEBI" id="CHEBI:30013"/>
        <dbReference type="ChEBI" id="CHEBI:30616"/>
        <dbReference type="ChEBI" id="CHEBI:61977"/>
        <dbReference type="ChEBI" id="CHEBI:456216"/>
        <dbReference type="EC" id="2.7.11.1"/>
    </reaction>
</comment>
<comment type="similarity">
    <text evidence="1">Belongs to the protein kinase superfamily. Ser/Thr protein kinase family.</text>
</comment>